<keyword id="KW-0627">Porphyrin biosynthesis</keyword>
<keyword id="KW-1185">Reference proteome</keyword>
<keyword id="KW-0808">Transferase</keyword>
<protein>
    <recommendedName>
        <fullName evidence="1">Porphobilinogen deaminase</fullName>
        <shortName evidence="1">PBG</shortName>
        <ecNumber evidence="1">2.5.1.61</ecNumber>
    </recommendedName>
    <alternativeName>
        <fullName evidence="1">Hydroxymethylbilane synthase</fullName>
        <shortName evidence="1">HMBS</shortName>
    </alternativeName>
    <alternativeName>
        <fullName evidence="1">Pre-uroporphyrinogen synthase</fullName>
    </alternativeName>
</protein>
<evidence type="ECO:0000255" key="1">
    <source>
        <dbReference type="HAMAP-Rule" id="MF_00260"/>
    </source>
</evidence>
<comment type="function">
    <text evidence="1">Tetrapolymerization of the monopyrrole PBG into the hydroxymethylbilane pre-uroporphyrinogen in several discrete steps.</text>
</comment>
<comment type="catalytic activity">
    <reaction evidence="1">
        <text>4 porphobilinogen + H2O = hydroxymethylbilane + 4 NH4(+)</text>
        <dbReference type="Rhea" id="RHEA:13185"/>
        <dbReference type="ChEBI" id="CHEBI:15377"/>
        <dbReference type="ChEBI" id="CHEBI:28938"/>
        <dbReference type="ChEBI" id="CHEBI:57845"/>
        <dbReference type="ChEBI" id="CHEBI:58126"/>
        <dbReference type="EC" id="2.5.1.61"/>
    </reaction>
</comment>
<comment type="cofactor">
    <cofactor evidence="1">
        <name>dipyrromethane</name>
        <dbReference type="ChEBI" id="CHEBI:60342"/>
    </cofactor>
    <text evidence="1">Binds 1 dipyrromethane group covalently.</text>
</comment>
<comment type="pathway">
    <text evidence="1">Porphyrin-containing compound metabolism; protoporphyrin-IX biosynthesis; coproporphyrinogen-III from 5-aminolevulinate: step 2/4.</text>
</comment>
<comment type="subunit">
    <text evidence="1">Monomer.</text>
</comment>
<comment type="miscellaneous">
    <text evidence="1">The porphobilinogen subunits are added to the dipyrromethane group.</text>
</comment>
<comment type="similarity">
    <text evidence="1">Belongs to the HMBS family.</text>
</comment>
<reference key="1">
    <citation type="journal article" date="2008" name="Genome Res.">
        <title>Insights from the complete genome sequence of Mycobacterium marinum on the evolution of Mycobacterium tuberculosis.</title>
        <authorList>
            <person name="Stinear T.P."/>
            <person name="Seemann T."/>
            <person name="Harrison P.F."/>
            <person name="Jenkin G.A."/>
            <person name="Davies J.K."/>
            <person name="Johnson P.D."/>
            <person name="Abdellah Z."/>
            <person name="Arrowsmith C."/>
            <person name="Chillingworth T."/>
            <person name="Churcher C."/>
            <person name="Clarke K."/>
            <person name="Cronin A."/>
            <person name="Davis P."/>
            <person name="Goodhead I."/>
            <person name="Holroyd N."/>
            <person name="Jagels K."/>
            <person name="Lord A."/>
            <person name="Moule S."/>
            <person name="Mungall K."/>
            <person name="Norbertczak H."/>
            <person name="Quail M.A."/>
            <person name="Rabbinowitsch E."/>
            <person name="Walker D."/>
            <person name="White B."/>
            <person name="Whitehead S."/>
            <person name="Small P.L."/>
            <person name="Brosch R."/>
            <person name="Ramakrishnan L."/>
            <person name="Fischbach M.A."/>
            <person name="Parkhill J."/>
            <person name="Cole S.T."/>
        </authorList>
    </citation>
    <scope>NUCLEOTIDE SEQUENCE [LARGE SCALE GENOMIC DNA]</scope>
    <source>
        <strain>ATCC BAA-535 / M</strain>
    </source>
</reference>
<proteinExistence type="inferred from homology"/>
<sequence>MIRIGTRGSLLATTQAATVRDALIANGHAAELVTISTLGDRSSAPIETLGVGVFTTALREAIEDGRVDAAVHSHKDLPTAQDPRFTIAAIPPRQDPRDAVVARDGLVLGELPVGSLVGTSSPRRAAQLRALGLGLEIRPLRGNLDTRLNRVSNGDLDAIVVARAGLARLGRLDDVTETLEPVQMLPAPAQGALAIECRAGDSRLATVLAELDDADTRAAVTAERALLAELEAGCSAPVGAIAEVVESIDEEGRVFEELSLRGCVAALDGSDVIRASGIGTSGRARELGLAVAAELFELGARELMWGEGNSPQGS</sequence>
<organism>
    <name type="scientific">Mycobacterium marinum (strain ATCC BAA-535 / M)</name>
    <dbReference type="NCBI Taxonomy" id="216594"/>
    <lineage>
        <taxon>Bacteria</taxon>
        <taxon>Bacillati</taxon>
        <taxon>Actinomycetota</taxon>
        <taxon>Actinomycetes</taxon>
        <taxon>Mycobacteriales</taxon>
        <taxon>Mycobacteriaceae</taxon>
        <taxon>Mycobacterium</taxon>
        <taxon>Mycobacterium ulcerans group</taxon>
    </lineage>
</organism>
<name>HEM3_MYCMM</name>
<feature type="chain" id="PRO_1000114164" description="Porphobilinogen deaminase">
    <location>
        <begin position="1"/>
        <end position="314"/>
    </location>
</feature>
<feature type="modified residue" description="S-(dipyrrolylmethanemethyl)cysteine" evidence="1">
    <location>
        <position position="234"/>
    </location>
</feature>
<gene>
    <name evidence="1" type="primary">hemC</name>
    <name type="ordered locus">MMAR_0843</name>
</gene>
<accession>B2HRJ2</accession>
<dbReference type="EC" id="2.5.1.61" evidence="1"/>
<dbReference type="EMBL" id="CP000854">
    <property type="protein sequence ID" value="ACC39304.1"/>
    <property type="molecule type" value="Genomic_DNA"/>
</dbReference>
<dbReference type="RefSeq" id="WP_012392780.1">
    <property type="nucleotide sequence ID" value="NC_010612.1"/>
</dbReference>
<dbReference type="SMR" id="B2HRJ2"/>
<dbReference type="STRING" id="216594.MMAR_0843"/>
<dbReference type="KEGG" id="mmi:MMAR_0843"/>
<dbReference type="eggNOG" id="COG0181">
    <property type="taxonomic scope" value="Bacteria"/>
</dbReference>
<dbReference type="HOGENOM" id="CLU_019704_1_0_11"/>
<dbReference type="OrthoDB" id="9810298at2"/>
<dbReference type="UniPathway" id="UPA00251">
    <property type="reaction ID" value="UER00319"/>
</dbReference>
<dbReference type="Proteomes" id="UP000001190">
    <property type="component" value="Chromosome"/>
</dbReference>
<dbReference type="GO" id="GO:0005737">
    <property type="term" value="C:cytoplasm"/>
    <property type="evidence" value="ECO:0007669"/>
    <property type="project" value="TreeGrafter"/>
</dbReference>
<dbReference type="GO" id="GO:0004418">
    <property type="term" value="F:hydroxymethylbilane synthase activity"/>
    <property type="evidence" value="ECO:0007669"/>
    <property type="project" value="UniProtKB-UniRule"/>
</dbReference>
<dbReference type="GO" id="GO:0006782">
    <property type="term" value="P:protoporphyrinogen IX biosynthetic process"/>
    <property type="evidence" value="ECO:0007669"/>
    <property type="project" value="UniProtKB-UniRule"/>
</dbReference>
<dbReference type="FunFam" id="3.30.160.40:FF:000001">
    <property type="entry name" value="Porphobilinogen deaminase"/>
    <property type="match status" value="1"/>
</dbReference>
<dbReference type="FunFam" id="3.40.190.10:FF:000005">
    <property type="entry name" value="Porphobilinogen deaminase"/>
    <property type="match status" value="1"/>
</dbReference>
<dbReference type="Gene3D" id="3.40.190.10">
    <property type="entry name" value="Periplasmic binding protein-like II"/>
    <property type="match status" value="2"/>
</dbReference>
<dbReference type="Gene3D" id="3.30.160.40">
    <property type="entry name" value="Porphobilinogen deaminase, C-terminal domain"/>
    <property type="match status" value="1"/>
</dbReference>
<dbReference type="HAMAP" id="MF_00260">
    <property type="entry name" value="Porphobil_deam"/>
    <property type="match status" value="1"/>
</dbReference>
<dbReference type="InterPro" id="IPR000860">
    <property type="entry name" value="HemC"/>
</dbReference>
<dbReference type="InterPro" id="IPR022419">
    <property type="entry name" value="Porphobilin_deaminase_cofac_BS"/>
</dbReference>
<dbReference type="InterPro" id="IPR022417">
    <property type="entry name" value="Porphobilin_deaminase_N"/>
</dbReference>
<dbReference type="InterPro" id="IPR022418">
    <property type="entry name" value="Porphobilinogen_deaminase_C"/>
</dbReference>
<dbReference type="InterPro" id="IPR036803">
    <property type="entry name" value="Porphobilinogen_deaminase_C_sf"/>
</dbReference>
<dbReference type="NCBIfam" id="TIGR00212">
    <property type="entry name" value="hemC"/>
    <property type="match status" value="1"/>
</dbReference>
<dbReference type="PANTHER" id="PTHR11557">
    <property type="entry name" value="PORPHOBILINOGEN DEAMINASE"/>
    <property type="match status" value="1"/>
</dbReference>
<dbReference type="PANTHER" id="PTHR11557:SF0">
    <property type="entry name" value="PORPHOBILINOGEN DEAMINASE"/>
    <property type="match status" value="1"/>
</dbReference>
<dbReference type="Pfam" id="PF01379">
    <property type="entry name" value="Porphobil_deam"/>
    <property type="match status" value="1"/>
</dbReference>
<dbReference type="Pfam" id="PF03900">
    <property type="entry name" value="Porphobil_deamC"/>
    <property type="match status" value="1"/>
</dbReference>
<dbReference type="PIRSF" id="PIRSF001438">
    <property type="entry name" value="4pyrrol_synth_OHMeBilane_synth"/>
    <property type="match status" value="1"/>
</dbReference>
<dbReference type="PRINTS" id="PR00151">
    <property type="entry name" value="PORPHBDMNASE"/>
</dbReference>
<dbReference type="SUPFAM" id="SSF53850">
    <property type="entry name" value="Periplasmic binding protein-like II"/>
    <property type="match status" value="1"/>
</dbReference>
<dbReference type="SUPFAM" id="SSF54782">
    <property type="entry name" value="Porphobilinogen deaminase (hydroxymethylbilane synthase), C-terminal domain"/>
    <property type="match status" value="1"/>
</dbReference>
<dbReference type="PROSITE" id="PS00533">
    <property type="entry name" value="PORPHOBILINOGEN_DEAM"/>
    <property type="match status" value="1"/>
</dbReference>